<proteinExistence type="inferred from homology"/>
<accession>B1J004</accession>
<protein>
    <recommendedName>
        <fullName evidence="1">7-cyano-7-deazaguanine synthase</fullName>
        <ecNumber evidence="1">6.3.4.20</ecNumber>
    </recommendedName>
    <alternativeName>
        <fullName evidence="1">7-cyano-7-carbaguanine synthase</fullName>
    </alternativeName>
    <alternativeName>
        <fullName evidence="1">PreQ(0) synthase</fullName>
    </alternativeName>
    <alternativeName>
        <fullName evidence="1">Queuosine biosynthesis protein QueC</fullName>
    </alternativeName>
</protein>
<feature type="chain" id="PRO_1000088152" description="7-cyano-7-deazaguanine synthase">
    <location>
        <begin position="1"/>
        <end position="231"/>
    </location>
</feature>
<feature type="binding site" evidence="1">
    <location>
        <begin position="8"/>
        <end position="18"/>
    </location>
    <ligand>
        <name>ATP</name>
        <dbReference type="ChEBI" id="CHEBI:30616"/>
    </ligand>
</feature>
<feature type="binding site" evidence="1">
    <location>
        <position position="188"/>
    </location>
    <ligand>
        <name>Zn(2+)</name>
        <dbReference type="ChEBI" id="CHEBI:29105"/>
    </ligand>
</feature>
<feature type="binding site" evidence="1">
    <location>
        <position position="197"/>
    </location>
    <ligand>
        <name>Zn(2+)</name>
        <dbReference type="ChEBI" id="CHEBI:29105"/>
    </ligand>
</feature>
<feature type="binding site" evidence="1">
    <location>
        <position position="200"/>
    </location>
    <ligand>
        <name>Zn(2+)</name>
        <dbReference type="ChEBI" id="CHEBI:29105"/>
    </ligand>
</feature>
<feature type="binding site" evidence="1">
    <location>
        <position position="203"/>
    </location>
    <ligand>
        <name>Zn(2+)</name>
        <dbReference type="ChEBI" id="CHEBI:29105"/>
    </ligand>
</feature>
<sequence>MKRAVVVFSGGQDSTTCLVQALQQYDEVHCVTFDYGQRHRAEIDVARELALKLGARAHKVLDVTLLNELAVSSLTRDSIPVPDYEPEADGIPNTFVPGRNILFLTLAAIYAYQVKAEAVITGVCETDFSGYPDCRDEFVKALNHAVSLGMAKDIRFETPLMWIDKAETWALADYYGKLDLVRNETLTCYNGIKGDGCSHCAACNLRANGLNHYLADKPTVMAAMKQKTGLR</sequence>
<reference key="1">
    <citation type="submission" date="2008-02" db="EMBL/GenBank/DDBJ databases">
        <title>Complete sequence of Escherichia coli C str. ATCC 8739.</title>
        <authorList>
            <person name="Copeland A."/>
            <person name="Lucas S."/>
            <person name="Lapidus A."/>
            <person name="Glavina del Rio T."/>
            <person name="Dalin E."/>
            <person name="Tice H."/>
            <person name="Bruce D."/>
            <person name="Goodwin L."/>
            <person name="Pitluck S."/>
            <person name="Kiss H."/>
            <person name="Brettin T."/>
            <person name="Detter J.C."/>
            <person name="Han C."/>
            <person name="Kuske C.R."/>
            <person name="Schmutz J."/>
            <person name="Larimer F."/>
            <person name="Land M."/>
            <person name="Hauser L."/>
            <person name="Kyrpides N."/>
            <person name="Mikhailova N."/>
            <person name="Ingram L."/>
            <person name="Richardson P."/>
        </authorList>
    </citation>
    <scope>NUCLEOTIDE SEQUENCE [LARGE SCALE GENOMIC DNA]</scope>
    <source>
        <strain>ATCC 8739 / DSM 1576 / NBRC 3972 / NCIMB 8545 / WDCM 00012 / Crooks</strain>
    </source>
</reference>
<comment type="function">
    <text evidence="1">Catalyzes the ATP-dependent conversion of 7-carboxy-7-deazaguanine (CDG) to 7-cyano-7-deazaguanine (preQ(0)).</text>
</comment>
<comment type="catalytic activity">
    <reaction evidence="1">
        <text>7-carboxy-7-deazaguanine + NH4(+) + ATP = 7-cyano-7-deazaguanine + ADP + phosphate + H2O + H(+)</text>
        <dbReference type="Rhea" id="RHEA:27982"/>
        <dbReference type="ChEBI" id="CHEBI:15377"/>
        <dbReference type="ChEBI" id="CHEBI:15378"/>
        <dbReference type="ChEBI" id="CHEBI:28938"/>
        <dbReference type="ChEBI" id="CHEBI:30616"/>
        <dbReference type="ChEBI" id="CHEBI:43474"/>
        <dbReference type="ChEBI" id="CHEBI:45075"/>
        <dbReference type="ChEBI" id="CHEBI:61036"/>
        <dbReference type="ChEBI" id="CHEBI:456216"/>
        <dbReference type="EC" id="6.3.4.20"/>
    </reaction>
</comment>
<comment type="cofactor">
    <cofactor evidence="1">
        <name>Zn(2+)</name>
        <dbReference type="ChEBI" id="CHEBI:29105"/>
    </cofactor>
    <text evidence="1">Binds 1 zinc ion per subunit.</text>
</comment>
<comment type="pathway">
    <text evidence="1">Purine metabolism; 7-cyano-7-deazaguanine biosynthesis.</text>
</comment>
<comment type="similarity">
    <text evidence="1">Belongs to the QueC family.</text>
</comment>
<name>QUEC_ECOLC</name>
<evidence type="ECO:0000255" key="1">
    <source>
        <dbReference type="HAMAP-Rule" id="MF_01633"/>
    </source>
</evidence>
<organism>
    <name type="scientific">Escherichia coli (strain ATCC 8739 / DSM 1576 / NBRC 3972 / NCIMB 8545 / WDCM 00012 / Crooks)</name>
    <dbReference type="NCBI Taxonomy" id="481805"/>
    <lineage>
        <taxon>Bacteria</taxon>
        <taxon>Pseudomonadati</taxon>
        <taxon>Pseudomonadota</taxon>
        <taxon>Gammaproteobacteria</taxon>
        <taxon>Enterobacterales</taxon>
        <taxon>Enterobacteriaceae</taxon>
        <taxon>Escherichia</taxon>
    </lineage>
</organism>
<keyword id="KW-0067">ATP-binding</keyword>
<keyword id="KW-0436">Ligase</keyword>
<keyword id="KW-0479">Metal-binding</keyword>
<keyword id="KW-0547">Nucleotide-binding</keyword>
<keyword id="KW-0671">Queuosine biosynthesis</keyword>
<keyword id="KW-0862">Zinc</keyword>
<gene>
    <name evidence="1" type="primary">queC</name>
    <name type="ordered locus">EcolC_3188</name>
</gene>
<dbReference type="EC" id="6.3.4.20" evidence="1"/>
<dbReference type="EMBL" id="CP000946">
    <property type="protein sequence ID" value="ACA78810.1"/>
    <property type="molecule type" value="Genomic_DNA"/>
</dbReference>
<dbReference type="RefSeq" id="WP_000817236.1">
    <property type="nucleotide sequence ID" value="NZ_MTFT01000010.1"/>
</dbReference>
<dbReference type="SMR" id="B1J004"/>
<dbReference type="KEGG" id="ecl:EcolC_3188"/>
<dbReference type="HOGENOM" id="CLU_081854_0_0_6"/>
<dbReference type="UniPathway" id="UPA00391"/>
<dbReference type="GO" id="GO:0005524">
    <property type="term" value="F:ATP binding"/>
    <property type="evidence" value="ECO:0007669"/>
    <property type="project" value="UniProtKB-UniRule"/>
</dbReference>
<dbReference type="GO" id="GO:0016879">
    <property type="term" value="F:ligase activity, forming carbon-nitrogen bonds"/>
    <property type="evidence" value="ECO:0007669"/>
    <property type="project" value="UniProtKB-UniRule"/>
</dbReference>
<dbReference type="GO" id="GO:0008270">
    <property type="term" value="F:zinc ion binding"/>
    <property type="evidence" value="ECO:0007669"/>
    <property type="project" value="UniProtKB-UniRule"/>
</dbReference>
<dbReference type="GO" id="GO:0008616">
    <property type="term" value="P:queuosine biosynthetic process"/>
    <property type="evidence" value="ECO:0007669"/>
    <property type="project" value="UniProtKB-UniRule"/>
</dbReference>
<dbReference type="CDD" id="cd01995">
    <property type="entry name" value="QueC-like"/>
    <property type="match status" value="1"/>
</dbReference>
<dbReference type="FunFam" id="3.40.50.620:FF:000017">
    <property type="entry name" value="7-cyano-7-deazaguanine synthase"/>
    <property type="match status" value="1"/>
</dbReference>
<dbReference type="Gene3D" id="3.40.50.620">
    <property type="entry name" value="HUPs"/>
    <property type="match status" value="1"/>
</dbReference>
<dbReference type="HAMAP" id="MF_01633">
    <property type="entry name" value="QueC"/>
    <property type="match status" value="1"/>
</dbReference>
<dbReference type="InterPro" id="IPR018317">
    <property type="entry name" value="QueC"/>
</dbReference>
<dbReference type="InterPro" id="IPR014729">
    <property type="entry name" value="Rossmann-like_a/b/a_fold"/>
</dbReference>
<dbReference type="NCBIfam" id="TIGR00364">
    <property type="entry name" value="7-cyano-7-deazaguanine synthase QueC"/>
    <property type="match status" value="1"/>
</dbReference>
<dbReference type="NCBIfam" id="NF008317">
    <property type="entry name" value="PRK11106.1"/>
    <property type="match status" value="1"/>
</dbReference>
<dbReference type="PANTHER" id="PTHR42914">
    <property type="entry name" value="7-CYANO-7-DEAZAGUANINE SYNTHASE"/>
    <property type="match status" value="1"/>
</dbReference>
<dbReference type="PANTHER" id="PTHR42914:SF1">
    <property type="entry name" value="7-CYANO-7-DEAZAGUANINE SYNTHASE"/>
    <property type="match status" value="1"/>
</dbReference>
<dbReference type="Pfam" id="PF06508">
    <property type="entry name" value="QueC"/>
    <property type="match status" value="1"/>
</dbReference>
<dbReference type="PIRSF" id="PIRSF006293">
    <property type="entry name" value="ExsB"/>
    <property type="match status" value="1"/>
</dbReference>
<dbReference type="SUPFAM" id="SSF52402">
    <property type="entry name" value="Adenine nucleotide alpha hydrolases-like"/>
    <property type="match status" value="1"/>
</dbReference>